<reference key="1">
    <citation type="journal article" date="2008" name="Proc. Natl. Acad. Sci. U.S.A.">
        <title>Complete genome of the uncultured termite group 1 bacteria in a single host protist cell.</title>
        <authorList>
            <person name="Hongoh Y."/>
            <person name="Sharma V.K."/>
            <person name="Prakash T."/>
            <person name="Noda S."/>
            <person name="Taylor T.D."/>
            <person name="Kudo T."/>
            <person name="Sakaki Y."/>
            <person name="Toyoda A."/>
            <person name="Hattori M."/>
            <person name="Ohkuma M."/>
        </authorList>
    </citation>
    <scope>NUCLEOTIDE SEQUENCE [LARGE SCALE GENOMIC DNA]</scope>
</reference>
<proteinExistence type="inferred from homology"/>
<keyword id="KW-0028">Amino-acid biosynthesis</keyword>
<keyword id="KW-0963">Cytoplasm</keyword>
<keyword id="KW-0220">Diaminopimelate biosynthesis</keyword>
<keyword id="KW-0456">Lyase</keyword>
<keyword id="KW-0457">Lysine biosynthesis</keyword>
<keyword id="KW-0704">Schiff base</keyword>
<gene>
    <name evidence="1" type="primary">dapA</name>
    <name type="ordered locus">TGRD_641</name>
</gene>
<protein>
    <recommendedName>
        <fullName evidence="1">4-hydroxy-tetrahydrodipicolinate synthase</fullName>
        <shortName evidence="1">HTPA synthase</shortName>
        <ecNumber evidence="1">4.3.3.7</ecNumber>
    </recommendedName>
</protein>
<evidence type="ECO:0000255" key="1">
    <source>
        <dbReference type="HAMAP-Rule" id="MF_00418"/>
    </source>
</evidence>
<evidence type="ECO:0000305" key="2"/>
<accession>B1GYN1</accession>
<name>DAPA_ENDTX</name>
<feature type="chain" id="PRO_1000134887" description="4-hydroxy-tetrahydrodipicolinate synthase">
    <location>
        <begin position="1"/>
        <end position="291"/>
    </location>
</feature>
<feature type="active site" description="Proton donor/acceptor" evidence="1">
    <location>
        <position position="132"/>
    </location>
</feature>
<feature type="active site" description="Schiff-base intermediate with substrate" evidence="1">
    <location>
        <position position="161"/>
    </location>
</feature>
<feature type="binding site" evidence="1">
    <location>
        <position position="44"/>
    </location>
    <ligand>
        <name>pyruvate</name>
        <dbReference type="ChEBI" id="CHEBI:15361"/>
    </ligand>
</feature>
<feature type="binding site" evidence="1">
    <location>
        <position position="202"/>
    </location>
    <ligand>
        <name>pyruvate</name>
        <dbReference type="ChEBI" id="CHEBI:15361"/>
    </ligand>
</feature>
<feature type="site" description="Part of a proton relay during catalysis" evidence="1">
    <location>
        <position position="43"/>
    </location>
</feature>
<feature type="site" description="Part of a proton relay during catalysis" evidence="1">
    <location>
        <position position="106"/>
    </location>
</feature>
<organism>
    <name type="scientific">Endomicrobium trichonymphae</name>
    <dbReference type="NCBI Taxonomy" id="1408204"/>
    <lineage>
        <taxon>Bacteria</taxon>
        <taxon>Pseudomonadati</taxon>
        <taxon>Elusimicrobiota</taxon>
        <taxon>Endomicrobiia</taxon>
        <taxon>Endomicrobiales</taxon>
        <taxon>Endomicrobiaceae</taxon>
        <taxon>Candidatus Endomicrobiellum</taxon>
    </lineage>
</organism>
<dbReference type="EC" id="4.3.3.7" evidence="1"/>
<dbReference type="EMBL" id="AP009510">
    <property type="protein sequence ID" value="BAG14124.1"/>
    <property type="molecule type" value="Genomic_DNA"/>
</dbReference>
<dbReference type="RefSeq" id="WP_015423648.1">
    <property type="nucleotide sequence ID" value="NC_020419.1"/>
</dbReference>
<dbReference type="SMR" id="B1GYN1"/>
<dbReference type="STRING" id="471821.TGRD_641"/>
<dbReference type="KEGG" id="eti:RSTT_602"/>
<dbReference type="KEGG" id="rsd:TGRD_641"/>
<dbReference type="PATRIC" id="fig|471821.5.peg.1076"/>
<dbReference type="HOGENOM" id="CLU_049343_7_1_0"/>
<dbReference type="OrthoDB" id="9782828at2"/>
<dbReference type="UniPathway" id="UPA00034">
    <property type="reaction ID" value="UER00017"/>
</dbReference>
<dbReference type="Proteomes" id="UP000001691">
    <property type="component" value="Chromosome"/>
</dbReference>
<dbReference type="GO" id="GO:0005829">
    <property type="term" value="C:cytosol"/>
    <property type="evidence" value="ECO:0007669"/>
    <property type="project" value="TreeGrafter"/>
</dbReference>
<dbReference type="GO" id="GO:0008840">
    <property type="term" value="F:4-hydroxy-tetrahydrodipicolinate synthase activity"/>
    <property type="evidence" value="ECO:0007669"/>
    <property type="project" value="UniProtKB-UniRule"/>
</dbReference>
<dbReference type="GO" id="GO:0019877">
    <property type="term" value="P:diaminopimelate biosynthetic process"/>
    <property type="evidence" value="ECO:0007669"/>
    <property type="project" value="UniProtKB-UniRule"/>
</dbReference>
<dbReference type="GO" id="GO:0009089">
    <property type="term" value="P:lysine biosynthetic process via diaminopimelate"/>
    <property type="evidence" value="ECO:0007669"/>
    <property type="project" value="UniProtKB-UniRule"/>
</dbReference>
<dbReference type="CDD" id="cd00950">
    <property type="entry name" value="DHDPS"/>
    <property type="match status" value="1"/>
</dbReference>
<dbReference type="Gene3D" id="3.20.20.70">
    <property type="entry name" value="Aldolase class I"/>
    <property type="match status" value="1"/>
</dbReference>
<dbReference type="HAMAP" id="MF_00418">
    <property type="entry name" value="DapA"/>
    <property type="match status" value="1"/>
</dbReference>
<dbReference type="InterPro" id="IPR013785">
    <property type="entry name" value="Aldolase_TIM"/>
</dbReference>
<dbReference type="InterPro" id="IPR005263">
    <property type="entry name" value="DapA"/>
</dbReference>
<dbReference type="InterPro" id="IPR002220">
    <property type="entry name" value="DapA-like"/>
</dbReference>
<dbReference type="InterPro" id="IPR020624">
    <property type="entry name" value="Schiff_base-form_aldolases_CS"/>
</dbReference>
<dbReference type="NCBIfam" id="TIGR00674">
    <property type="entry name" value="dapA"/>
    <property type="match status" value="1"/>
</dbReference>
<dbReference type="PANTHER" id="PTHR12128:SF66">
    <property type="entry name" value="4-HYDROXY-2-OXOGLUTARATE ALDOLASE, MITOCHONDRIAL"/>
    <property type="match status" value="1"/>
</dbReference>
<dbReference type="PANTHER" id="PTHR12128">
    <property type="entry name" value="DIHYDRODIPICOLINATE SYNTHASE"/>
    <property type="match status" value="1"/>
</dbReference>
<dbReference type="Pfam" id="PF00701">
    <property type="entry name" value="DHDPS"/>
    <property type="match status" value="1"/>
</dbReference>
<dbReference type="PIRSF" id="PIRSF001365">
    <property type="entry name" value="DHDPS"/>
    <property type="match status" value="1"/>
</dbReference>
<dbReference type="PRINTS" id="PR00146">
    <property type="entry name" value="DHPICSNTHASE"/>
</dbReference>
<dbReference type="SMART" id="SM01130">
    <property type="entry name" value="DHDPS"/>
    <property type="match status" value="1"/>
</dbReference>
<dbReference type="SUPFAM" id="SSF51569">
    <property type="entry name" value="Aldolase"/>
    <property type="match status" value="1"/>
</dbReference>
<dbReference type="PROSITE" id="PS00665">
    <property type="entry name" value="DHDPS_1"/>
    <property type="match status" value="1"/>
</dbReference>
<comment type="function">
    <text evidence="1">Catalyzes the condensation of (S)-aspartate-beta-semialdehyde [(S)-ASA] and pyruvate to 4-hydroxy-tetrahydrodipicolinate (HTPA).</text>
</comment>
<comment type="catalytic activity">
    <reaction evidence="1">
        <text>L-aspartate 4-semialdehyde + pyruvate = (2S,4S)-4-hydroxy-2,3,4,5-tetrahydrodipicolinate + H2O + H(+)</text>
        <dbReference type="Rhea" id="RHEA:34171"/>
        <dbReference type="ChEBI" id="CHEBI:15361"/>
        <dbReference type="ChEBI" id="CHEBI:15377"/>
        <dbReference type="ChEBI" id="CHEBI:15378"/>
        <dbReference type="ChEBI" id="CHEBI:67139"/>
        <dbReference type="ChEBI" id="CHEBI:537519"/>
        <dbReference type="EC" id="4.3.3.7"/>
    </reaction>
</comment>
<comment type="pathway">
    <text evidence="1">Amino-acid biosynthesis; L-lysine biosynthesis via DAP pathway; (S)-tetrahydrodipicolinate from L-aspartate: step 3/4.</text>
</comment>
<comment type="subunit">
    <text evidence="1">Homotetramer; dimer of dimers.</text>
</comment>
<comment type="subcellular location">
    <subcellularLocation>
        <location evidence="1">Cytoplasm</location>
    </subcellularLocation>
</comment>
<comment type="similarity">
    <text evidence="1">Belongs to the DapA family.</text>
</comment>
<comment type="caution">
    <text evidence="2">Was originally thought to be a dihydrodipicolinate synthase (DHDPS), catalyzing the condensation of (S)-aspartate-beta-semialdehyde [(S)-ASA] and pyruvate to dihydrodipicolinate (DHDP). However, it was shown in E.coli that the product of the enzymatic reaction is not dihydrodipicolinate but in fact (4S)-4-hydroxy-2,3,4,5-tetrahydro-(2S)-dipicolinic acid (HTPA), and that the consecutive dehydration reaction leading to DHDP is not spontaneous but catalyzed by DapB.</text>
</comment>
<sequence>MFSGVYTALITPFKDYKVDFDAFEKLIENQYKKGVNGIVPCGTTGESPTLSCKEHEEVIEFCVEKAKGKMKVLAGTGSNSTDEAIYFTRTAKRVGCDGVLVVSPYYNKPTQKGLYLHFKTIADTIDIPIVLYNIAGRTSINIEPATVAKLFKNCKNIIGVKEASGSLDQMSAIKSLVPDIELISGDDALTLPLLSIGGIGVISVLSNIIPTEIVSLVKTFEKGDLKEAVKIHYKLLPLVKLMFIETNPIPVKTVASLLGMCSADLRLPMCEMEEPNRLKLEKALKDFGLLK</sequence>